<accession>Q5FSY7</accession>
<dbReference type="EMBL" id="CP000009">
    <property type="protein sequence ID" value="AAW60509.1"/>
    <property type="molecule type" value="Genomic_DNA"/>
</dbReference>
<dbReference type="SMR" id="Q5FSY7"/>
<dbReference type="STRING" id="290633.GOX0732"/>
<dbReference type="KEGG" id="gox:GOX0732"/>
<dbReference type="eggNOG" id="COG0257">
    <property type="taxonomic scope" value="Bacteria"/>
</dbReference>
<dbReference type="HOGENOM" id="CLU_135723_3_2_5"/>
<dbReference type="Proteomes" id="UP000006375">
    <property type="component" value="Chromosome"/>
</dbReference>
<dbReference type="GO" id="GO:1990904">
    <property type="term" value="C:ribonucleoprotein complex"/>
    <property type="evidence" value="ECO:0007669"/>
    <property type="project" value="UniProtKB-KW"/>
</dbReference>
<dbReference type="GO" id="GO:0005840">
    <property type="term" value="C:ribosome"/>
    <property type="evidence" value="ECO:0007669"/>
    <property type="project" value="UniProtKB-KW"/>
</dbReference>
<dbReference type="GO" id="GO:0003735">
    <property type="term" value="F:structural constituent of ribosome"/>
    <property type="evidence" value="ECO:0007669"/>
    <property type="project" value="InterPro"/>
</dbReference>
<dbReference type="GO" id="GO:0006412">
    <property type="term" value="P:translation"/>
    <property type="evidence" value="ECO:0007669"/>
    <property type="project" value="UniProtKB-UniRule"/>
</dbReference>
<dbReference type="HAMAP" id="MF_00251">
    <property type="entry name" value="Ribosomal_bL36"/>
    <property type="match status" value="1"/>
</dbReference>
<dbReference type="InterPro" id="IPR000473">
    <property type="entry name" value="Ribosomal_bL36"/>
</dbReference>
<dbReference type="InterPro" id="IPR035977">
    <property type="entry name" value="Ribosomal_bL36_sp"/>
</dbReference>
<dbReference type="InterPro" id="IPR047621">
    <property type="entry name" value="Ribosomal_L36_bact"/>
</dbReference>
<dbReference type="NCBIfam" id="NF002021">
    <property type="entry name" value="PRK00831.1"/>
    <property type="match status" value="1"/>
</dbReference>
<dbReference type="NCBIfam" id="TIGR01022">
    <property type="entry name" value="rpmJ_bact"/>
    <property type="match status" value="1"/>
</dbReference>
<dbReference type="PANTHER" id="PTHR47781">
    <property type="entry name" value="50S RIBOSOMAL PROTEIN L36 2"/>
    <property type="match status" value="1"/>
</dbReference>
<dbReference type="PANTHER" id="PTHR47781:SF1">
    <property type="entry name" value="LARGE RIBOSOMAL SUBUNIT PROTEIN BL36B"/>
    <property type="match status" value="1"/>
</dbReference>
<dbReference type="Pfam" id="PF00444">
    <property type="entry name" value="Ribosomal_L36"/>
    <property type="match status" value="1"/>
</dbReference>
<dbReference type="SUPFAM" id="SSF57840">
    <property type="entry name" value="Ribosomal protein L36"/>
    <property type="match status" value="1"/>
</dbReference>
<evidence type="ECO:0000255" key="1">
    <source>
        <dbReference type="HAMAP-Rule" id="MF_00251"/>
    </source>
</evidence>
<evidence type="ECO:0000305" key="2"/>
<reference key="1">
    <citation type="journal article" date="2005" name="Nat. Biotechnol.">
        <title>Complete genome sequence of the acetic acid bacterium Gluconobacter oxydans.</title>
        <authorList>
            <person name="Prust C."/>
            <person name="Hoffmeister M."/>
            <person name="Liesegang H."/>
            <person name="Wiezer A."/>
            <person name="Fricke W.F."/>
            <person name="Ehrenreich A."/>
            <person name="Gottschalk G."/>
            <person name="Deppenmeier U."/>
        </authorList>
    </citation>
    <scope>NUCLEOTIDE SEQUENCE [LARGE SCALE GENOMIC DNA]</scope>
    <source>
        <strain>621H</strain>
    </source>
</reference>
<proteinExistence type="inferred from homology"/>
<comment type="similarity">
    <text evidence="1">Belongs to the bacterial ribosomal protein bL36 family.</text>
</comment>
<organism>
    <name type="scientific">Gluconobacter oxydans (strain 621H)</name>
    <name type="common">Gluconobacter suboxydans</name>
    <dbReference type="NCBI Taxonomy" id="290633"/>
    <lineage>
        <taxon>Bacteria</taxon>
        <taxon>Pseudomonadati</taxon>
        <taxon>Pseudomonadota</taxon>
        <taxon>Alphaproteobacteria</taxon>
        <taxon>Acetobacterales</taxon>
        <taxon>Acetobacteraceae</taxon>
        <taxon>Gluconobacter</taxon>
    </lineage>
</organism>
<name>RL36_GLUOX</name>
<feature type="chain" id="PRO_0000302212" description="Large ribosomal subunit protein bL36">
    <location>
        <begin position="1"/>
        <end position="41"/>
    </location>
</feature>
<protein>
    <recommendedName>
        <fullName evidence="1">Large ribosomal subunit protein bL36</fullName>
    </recommendedName>
    <alternativeName>
        <fullName evidence="2">50S ribosomal protein L36</fullName>
    </alternativeName>
</protein>
<gene>
    <name evidence="1" type="primary">rpmJ</name>
    <name type="ordered locus">GOX0732</name>
</gene>
<sequence length="41" mass="4927">MKIRNSLKSAKVRDKDCRVVRRRGRVYIINKKNPRMKARQG</sequence>
<keyword id="KW-1185">Reference proteome</keyword>
<keyword id="KW-0687">Ribonucleoprotein</keyword>
<keyword id="KW-0689">Ribosomal protein</keyword>